<evidence type="ECO:0000250" key="1">
    <source>
        <dbReference type="UniProtKB" id="P60301"/>
    </source>
</evidence>
<evidence type="ECO:0000269" key="2">
    <source>
    </source>
</evidence>
<evidence type="ECO:0000305" key="3"/>
<name>3SI13_DENAN</name>
<reference key="1">
    <citation type="journal article" date="2000" name="Toxicon">
        <title>M1-toxin isotoxins from the green mamba (Dendroaspis angusticeps) that selectively block m1 muscarinic receptors.</title>
        <authorList>
            <person name="Carsi J.M."/>
            <person name="Potter L.T."/>
        </authorList>
    </citation>
    <scope>PROTEIN SEQUENCE</scope>
    <scope>FUNCTION</scope>
    <scope>SUBCELLULAR LOCATION</scope>
    <source>
        <tissue>Venom</tissue>
    </source>
</reference>
<dbReference type="SMR" id="P60235"/>
<dbReference type="GO" id="GO:0005576">
    <property type="term" value="C:extracellular region"/>
    <property type="evidence" value="ECO:0007669"/>
    <property type="project" value="UniProtKB-SubCell"/>
</dbReference>
<dbReference type="GO" id="GO:0090729">
    <property type="term" value="F:toxin activity"/>
    <property type="evidence" value="ECO:0007669"/>
    <property type="project" value="UniProtKB-KW"/>
</dbReference>
<dbReference type="CDD" id="cd00206">
    <property type="entry name" value="TFP_snake_toxin"/>
    <property type="match status" value="1"/>
</dbReference>
<dbReference type="Gene3D" id="2.10.60.10">
    <property type="entry name" value="CD59"/>
    <property type="match status" value="1"/>
</dbReference>
<dbReference type="InterPro" id="IPR003571">
    <property type="entry name" value="Snake_3FTx"/>
</dbReference>
<dbReference type="InterPro" id="IPR045860">
    <property type="entry name" value="Snake_toxin-like_sf"/>
</dbReference>
<dbReference type="InterPro" id="IPR054131">
    <property type="entry name" value="Toxin_cobra-type"/>
</dbReference>
<dbReference type="Pfam" id="PF21947">
    <property type="entry name" value="Toxin_cobra-type"/>
    <property type="match status" value="1"/>
</dbReference>
<dbReference type="SUPFAM" id="SSF57302">
    <property type="entry name" value="Snake toxin-like"/>
    <property type="match status" value="1"/>
</dbReference>
<comment type="function">
    <text evidence="2">Binds irreversibly and specifically to M1 (CHRM1) muscarinic acetylcholine receptors, blocking further binding of antagonists and preventing the action of agonists.</text>
</comment>
<comment type="subunit">
    <text>Monomer.</text>
</comment>
<comment type="subcellular location">
    <subcellularLocation>
        <location evidence="2">Secreted</location>
    </subcellularLocation>
</comment>
<comment type="tissue specificity">
    <text evidence="3">Expressed by the venom gland.</text>
</comment>
<comment type="PTM">
    <text evidence="1">Contains 4 disulfide bonds.</text>
</comment>
<comment type="miscellaneous">
    <text evidence="3">Is classified as a P-type cytotoxin, since a proline residue stands at position 33 (Pro-31 in standard classification).</text>
</comment>
<comment type="similarity">
    <text evidence="3">Belongs to the three-finger toxin family. Short-chain subfamily. Aminergic toxin sub-subfamily.</text>
</comment>
<organism>
    <name type="scientific">Dendroaspis angusticeps</name>
    <name type="common">Eastern green mamba</name>
    <name type="synonym">Naja angusticeps</name>
    <dbReference type="NCBI Taxonomy" id="8618"/>
    <lineage>
        <taxon>Eukaryota</taxon>
        <taxon>Metazoa</taxon>
        <taxon>Chordata</taxon>
        <taxon>Craniata</taxon>
        <taxon>Vertebrata</taxon>
        <taxon>Euteleostomi</taxon>
        <taxon>Lepidosauria</taxon>
        <taxon>Squamata</taxon>
        <taxon>Bifurcata</taxon>
        <taxon>Unidentata</taxon>
        <taxon>Episquamata</taxon>
        <taxon>Toxicofera</taxon>
        <taxon>Serpentes</taxon>
        <taxon>Colubroidea</taxon>
        <taxon>Elapidae</taxon>
        <taxon>Elapinae</taxon>
        <taxon>Dendroaspis</taxon>
    </lineage>
</organism>
<proteinExistence type="evidence at protein level"/>
<sequence length="40" mass="4807">LTCVKSDSIWFPTSEDCPDGQNLCFKKWQYISPRMYDFTR</sequence>
<keyword id="KW-0903">Direct protein sequencing</keyword>
<keyword id="KW-1015">Disulfide bond</keyword>
<keyword id="KW-1214">G-protein coupled acetylcholine receptor impairing toxin</keyword>
<keyword id="KW-1213">G-protein coupled receptor impairing toxin</keyword>
<keyword id="KW-0528">Neurotoxin</keyword>
<keyword id="KW-0629">Postsynaptic neurotoxin</keyword>
<keyword id="KW-0964">Secreted</keyword>
<keyword id="KW-0800">Toxin</keyword>
<feature type="chain" id="PRO_0000093645" description="Muscarinic m1-toxin3" evidence="2">
    <location>
        <begin position="1"/>
        <end position="40" status="greater than"/>
    </location>
</feature>
<feature type="disulfide bond" evidence="1">
    <location>
        <begin position="3"/>
        <end position="24"/>
    </location>
</feature>
<feature type="non-terminal residue">
    <location>
        <position position="40"/>
    </location>
</feature>
<accession>P60235</accession>
<protein>
    <recommendedName>
        <fullName>Muscarinic m1-toxin3</fullName>
    </recommendedName>
</protein>